<dbReference type="EC" id="7.1.1.-" evidence="1"/>
<dbReference type="EMBL" id="AE007869">
    <property type="protein sequence ID" value="AAK87067.1"/>
    <property type="molecule type" value="Genomic_DNA"/>
</dbReference>
<dbReference type="PIR" id="AH2732">
    <property type="entry name" value="AH2732"/>
</dbReference>
<dbReference type="PIR" id="B97514">
    <property type="entry name" value="B97514"/>
</dbReference>
<dbReference type="RefSeq" id="NP_354282.1">
    <property type="nucleotide sequence ID" value="NC_003062.2"/>
</dbReference>
<dbReference type="RefSeq" id="WP_006312711.1">
    <property type="nucleotide sequence ID" value="NC_003062.2"/>
</dbReference>
<dbReference type="SMR" id="A9CJA9"/>
<dbReference type="STRING" id="176299.Atu1272"/>
<dbReference type="EnsemblBacteria" id="AAK87067">
    <property type="protein sequence ID" value="AAK87067"/>
    <property type="gene ID" value="Atu1272"/>
</dbReference>
<dbReference type="GeneID" id="79863792"/>
<dbReference type="KEGG" id="atu:Atu1272"/>
<dbReference type="PATRIC" id="fig|176299.10.peg.1289"/>
<dbReference type="eggNOG" id="COG0649">
    <property type="taxonomic scope" value="Bacteria"/>
</dbReference>
<dbReference type="HOGENOM" id="CLU_015134_1_1_5"/>
<dbReference type="OrthoDB" id="9801496at2"/>
<dbReference type="PhylomeDB" id="A9CJA9"/>
<dbReference type="BioCyc" id="AGRO:ATU1272-MONOMER"/>
<dbReference type="Proteomes" id="UP000000813">
    <property type="component" value="Chromosome circular"/>
</dbReference>
<dbReference type="GO" id="GO:0005886">
    <property type="term" value="C:plasma membrane"/>
    <property type="evidence" value="ECO:0007669"/>
    <property type="project" value="UniProtKB-SubCell"/>
</dbReference>
<dbReference type="GO" id="GO:0051287">
    <property type="term" value="F:NAD binding"/>
    <property type="evidence" value="ECO:0007669"/>
    <property type="project" value="InterPro"/>
</dbReference>
<dbReference type="GO" id="GO:0050136">
    <property type="term" value="F:NADH:ubiquinone reductase (non-electrogenic) activity"/>
    <property type="evidence" value="ECO:0007669"/>
    <property type="project" value="UniProtKB-UniRule"/>
</dbReference>
<dbReference type="GO" id="GO:0048038">
    <property type="term" value="F:quinone binding"/>
    <property type="evidence" value="ECO:0007669"/>
    <property type="project" value="UniProtKB-KW"/>
</dbReference>
<dbReference type="FunFam" id="1.10.645.10:FF:000005">
    <property type="entry name" value="NADH-quinone oxidoreductase subunit D"/>
    <property type="match status" value="1"/>
</dbReference>
<dbReference type="Gene3D" id="1.10.645.10">
    <property type="entry name" value="Cytochrome-c3 Hydrogenase, chain B"/>
    <property type="match status" value="1"/>
</dbReference>
<dbReference type="HAMAP" id="MF_01358">
    <property type="entry name" value="NDH1_NuoD"/>
    <property type="match status" value="1"/>
</dbReference>
<dbReference type="InterPro" id="IPR001135">
    <property type="entry name" value="NADH_Q_OxRdtase_suD"/>
</dbReference>
<dbReference type="InterPro" id="IPR014029">
    <property type="entry name" value="NADH_UbQ_OxRdtase_49kDa_CS"/>
</dbReference>
<dbReference type="InterPro" id="IPR022885">
    <property type="entry name" value="NDH1_su_D/H"/>
</dbReference>
<dbReference type="InterPro" id="IPR029014">
    <property type="entry name" value="NiFe-Hase_large"/>
</dbReference>
<dbReference type="NCBIfam" id="TIGR01962">
    <property type="entry name" value="NuoD"/>
    <property type="match status" value="1"/>
</dbReference>
<dbReference type="NCBIfam" id="NF004739">
    <property type="entry name" value="PRK06075.1"/>
    <property type="match status" value="1"/>
</dbReference>
<dbReference type="PANTHER" id="PTHR11993:SF10">
    <property type="entry name" value="NADH DEHYDROGENASE [UBIQUINONE] IRON-SULFUR PROTEIN 2, MITOCHONDRIAL"/>
    <property type="match status" value="1"/>
</dbReference>
<dbReference type="PANTHER" id="PTHR11993">
    <property type="entry name" value="NADH-UBIQUINONE OXIDOREDUCTASE 49 KDA SUBUNIT"/>
    <property type="match status" value="1"/>
</dbReference>
<dbReference type="Pfam" id="PF00346">
    <property type="entry name" value="Complex1_49kDa"/>
    <property type="match status" value="1"/>
</dbReference>
<dbReference type="SUPFAM" id="SSF56762">
    <property type="entry name" value="HydB/Nqo4-like"/>
    <property type="match status" value="1"/>
</dbReference>
<dbReference type="PROSITE" id="PS00535">
    <property type="entry name" value="COMPLEX1_49K"/>
    <property type="match status" value="1"/>
</dbReference>
<sequence>MTEHNVRNFTINFGPEHPSAHGVLRLVLELDGEIVERVDPHIGLLHRGTEKLIETKTYLQAVPYFDRLDYVAPMNQEHAFALAVEKLLGLEIPMRGQLIRVLYSEIGRILSHIMNVTTQAMDVGAMTPPVWGFEEREKLMVFYERACGARMHSAYVRPGGVHQDLPPELVDDIGKWCDPFLTVLDNIEGLLTDNRIYKQRNVDIGVVSLEDAFAWGFTGVMVRGSGAAWDLRRSQPYECYSDLEFDIPVGKNGDCYDRYLIRMQEMRESVKIMKQCVDRLSGKHRIGPVSSLDGKVVPPKRGEMKRSMEALIHHFKLYTEGYHVPAGEVYAAVEAPKGEFGVYVVADGSNKPYRCKIRAPGYAHLQAMDFLCKGHQLADVTAVLGSLDIVFGEVDR</sequence>
<protein>
    <recommendedName>
        <fullName evidence="1">NADH-quinone oxidoreductase subunit D</fullName>
        <ecNumber evidence="1">7.1.1.-</ecNumber>
    </recommendedName>
    <alternativeName>
        <fullName evidence="1">NADH dehydrogenase I subunit D</fullName>
    </alternativeName>
    <alternativeName>
        <fullName evidence="1">NDH-1 subunit D</fullName>
    </alternativeName>
</protein>
<reference key="1">
    <citation type="journal article" date="2001" name="Science">
        <title>Genome sequence of the plant pathogen and biotechnology agent Agrobacterium tumefaciens C58.</title>
        <authorList>
            <person name="Goodner B."/>
            <person name="Hinkle G."/>
            <person name="Gattung S."/>
            <person name="Miller N."/>
            <person name="Blanchard M."/>
            <person name="Qurollo B."/>
            <person name="Goldman B.S."/>
            <person name="Cao Y."/>
            <person name="Askenazi M."/>
            <person name="Halling C."/>
            <person name="Mullin L."/>
            <person name="Houmiel K."/>
            <person name="Gordon J."/>
            <person name="Vaudin M."/>
            <person name="Iartchouk O."/>
            <person name="Epp A."/>
            <person name="Liu F."/>
            <person name="Wollam C."/>
            <person name="Allinger M."/>
            <person name="Doughty D."/>
            <person name="Scott C."/>
            <person name="Lappas C."/>
            <person name="Markelz B."/>
            <person name="Flanagan C."/>
            <person name="Crowell C."/>
            <person name="Gurson J."/>
            <person name="Lomo C."/>
            <person name="Sear C."/>
            <person name="Strub G."/>
            <person name="Cielo C."/>
            <person name="Slater S."/>
        </authorList>
    </citation>
    <scope>NUCLEOTIDE SEQUENCE [LARGE SCALE GENOMIC DNA]</scope>
    <source>
        <strain>C58 / ATCC 33970</strain>
    </source>
</reference>
<reference key="2">
    <citation type="journal article" date="2001" name="Science">
        <title>The genome of the natural genetic engineer Agrobacterium tumefaciens C58.</title>
        <authorList>
            <person name="Wood D.W."/>
            <person name="Setubal J.C."/>
            <person name="Kaul R."/>
            <person name="Monks D.E."/>
            <person name="Kitajima J.P."/>
            <person name="Okura V.K."/>
            <person name="Zhou Y."/>
            <person name="Chen L."/>
            <person name="Wood G.E."/>
            <person name="Almeida N.F. Jr."/>
            <person name="Woo L."/>
            <person name="Chen Y."/>
            <person name="Paulsen I.T."/>
            <person name="Eisen J.A."/>
            <person name="Karp P.D."/>
            <person name="Bovee D. Sr."/>
            <person name="Chapman P."/>
            <person name="Clendenning J."/>
            <person name="Deatherage G."/>
            <person name="Gillet W."/>
            <person name="Grant C."/>
            <person name="Kutyavin T."/>
            <person name="Levy R."/>
            <person name="Li M.-J."/>
            <person name="McClelland E."/>
            <person name="Palmieri A."/>
            <person name="Raymond C."/>
            <person name="Rouse G."/>
            <person name="Saenphimmachak C."/>
            <person name="Wu Z."/>
            <person name="Romero P."/>
            <person name="Gordon D."/>
            <person name="Zhang S."/>
            <person name="Yoo H."/>
            <person name="Tao Y."/>
            <person name="Biddle P."/>
            <person name="Jung M."/>
            <person name="Krespan W."/>
            <person name="Perry M."/>
            <person name="Gordon-Kamm B."/>
            <person name="Liao L."/>
            <person name="Kim S."/>
            <person name="Hendrick C."/>
            <person name="Zhao Z.-Y."/>
            <person name="Dolan M."/>
            <person name="Chumley F."/>
            <person name="Tingey S.V."/>
            <person name="Tomb J.-F."/>
            <person name="Gordon M.P."/>
            <person name="Olson M.V."/>
            <person name="Nester E.W."/>
        </authorList>
    </citation>
    <scope>NUCLEOTIDE SEQUENCE [LARGE SCALE GENOMIC DNA]</scope>
    <source>
        <strain>C58 / ATCC 33970</strain>
    </source>
</reference>
<organism>
    <name type="scientific">Agrobacterium fabrum (strain C58 / ATCC 33970)</name>
    <name type="common">Agrobacterium tumefaciens (strain C58)</name>
    <dbReference type="NCBI Taxonomy" id="176299"/>
    <lineage>
        <taxon>Bacteria</taxon>
        <taxon>Pseudomonadati</taxon>
        <taxon>Pseudomonadota</taxon>
        <taxon>Alphaproteobacteria</taxon>
        <taxon>Hyphomicrobiales</taxon>
        <taxon>Rhizobiaceae</taxon>
        <taxon>Rhizobium/Agrobacterium group</taxon>
        <taxon>Agrobacterium</taxon>
        <taxon>Agrobacterium tumefaciens complex</taxon>
    </lineage>
</organism>
<proteinExistence type="inferred from homology"/>
<keyword id="KW-0997">Cell inner membrane</keyword>
<keyword id="KW-1003">Cell membrane</keyword>
<keyword id="KW-0472">Membrane</keyword>
<keyword id="KW-0520">NAD</keyword>
<keyword id="KW-0874">Quinone</keyword>
<keyword id="KW-1185">Reference proteome</keyword>
<keyword id="KW-1278">Translocase</keyword>
<keyword id="KW-0813">Transport</keyword>
<keyword id="KW-0830">Ubiquinone</keyword>
<name>NUOD_AGRFC</name>
<comment type="function">
    <text evidence="1">NDH-1 shuttles electrons from NADH, via FMN and iron-sulfur (Fe-S) centers, to quinones in the respiratory chain. The immediate electron acceptor for the enzyme in this species is believed to be ubiquinone. Couples the redox reaction to proton translocation (for every two electrons transferred, four hydrogen ions are translocated across the cytoplasmic membrane), and thus conserves the redox energy in a proton gradient.</text>
</comment>
<comment type="catalytic activity">
    <reaction evidence="1">
        <text>a quinone + NADH + 5 H(+)(in) = a quinol + NAD(+) + 4 H(+)(out)</text>
        <dbReference type="Rhea" id="RHEA:57888"/>
        <dbReference type="ChEBI" id="CHEBI:15378"/>
        <dbReference type="ChEBI" id="CHEBI:24646"/>
        <dbReference type="ChEBI" id="CHEBI:57540"/>
        <dbReference type="ChEBI" id="CHEBI:57945"/>
        <dbReference type="ChEBI" id="CHEBI:132124"/>
    </reaction>
</comment>
<comment type="subunit">
    <text evidence="1">NDH-1 is composed of 14 different subunits. Subunits NuoB, C, D, E, F, and G constitute the peripheral sector of the complex.</text>
</comment>
<comment type="subcellular location">
    <subcellularLocation>
        <location evidence="1">Cell inner membrane</location>
        <topology evidence="1">Peripheral membrane protein</topology>
        <orientation evidence="1">Cytoplasmic side</orientation>
    </subcellularLocation>
</comment>
<comment type="similarity">
    <text evidence="1">Belongs to the complex I 49 kDa subunit family.</text>
</comment>
<accession>A9CJA9</accession>
<gene>
    <name evidence="1" type="primary">nuoD</name>
    <name type="ordered locus">Atu1272</name>
    <name type="ORF">AGR_C_2346</name>
</gene>
<feature type="chain" id="PRO_0000357753" description="NADH-quinone oxidoreductase subunit D">
    <location>
        <begin position="1"/>
        <end position="396"/>
    </location>
</feature>
<evidence type="ECO:0000255" key="1">
    <source>
        <dbReference type="HAMAP-Rule" id="MF_01358"/>
    </source>
</evidence>